<keyword id="KW-0052">Apoplast</keyword>
<keyword id="KW-0325">Glycoprotein</keyword>
<keyword id="KW-1185">Reference proteome</keyword>
<keyword id="KW-0964">Secreted</keyword>
<keyword id="KW-0732">Signal</keyword>
<dbReference type="EMBL" id="AP001307">
    <property type="protein sequence ID" value="BAB01912.1"/>
    <property type="molecule type" value="Genomic_DNA"/>
</dbReference>
<dbReference type="EMBL" id="CP002686">
    <property type="protein sequence ID" value="AEE75387.1"/>
    <property type="molecule type" value="Genomic_DNA"/>
</dbReference>
<dbReference type="EMBL" id="AK118030">
    <property type="protein sequence ID" value="BAC42662.1"/>
    <property type="molecule type" value="mRNA"/>
</dbReference>
<dbReference type="EMBL" id="BT010587">
    <property type="protein sequence ID" value="AAQ89609.1"/>
    <property type="molecule type" value="mRNA"/>
</dbReference>
<dbReference type="RefSeq" id="NP_187974.1">
    <property type="nucleotide sequence ID" value="NM_112211.3"/>
</dbReference>
<dbReference type="SMR" id="Q9LID5"/>
<dbReference type="FunCoup" id="Q9LID5">
    <property type="interactions" value="44"/>
</dbReference>
<dbReference type="STRING" id="3702.Q9LID5"/>
<dbReference type="GlyCosmos" id="Q9LID5">
    <property type="glycosylation" value="3 sites, No reported glycans"/>
</dbReference>
<dbReference type="GlyGen" id="Q9LID5">
    <property type="glycosylation" value="3 sites"/>
</dbReference>
<dbReference type="PaxDb" id="3702-AT3G13650.1"/>
<dbReference type="ProteomicsDB" id="224165"/>
<dbReference type="EnsemblPlants" id="AT3G13650.1">
    <property type="protein sequence ID" value="AT3G13650.1"/>
    <property type="gene ID" value="AT3G13650"/>
</dbReference>
<dbReference type="GeneID" id="820569"/>
<dbReference type="Gramene" id="AT3G13650.1">
    <property type="protein sequence ID" value="AT3G13650.1"/>
    <property type="gene ID" value="AT3G13650"/>
</dbReference>
<dbReference type="KEGG" id="ath:AT3G13650"/>
<dbReference type="Araport" id="AT3G13650"/>
<dbReference type="TAIR" id="AT3G13650"/>
<dbReference type="eggNOG" id="ENOG502RXST">
    <property type="taxonomic scope" value="Eukaryota"/>
</dbReference>
<dbReference type="HOGENOM" id="CLU_087111_2_1_1"/>
<dbReference type="InParanoid" id="Q9LID5"/>
<dbReference type="OMA" id="YEEREMP"/>
<dbReference type="PhylomeDB" id="Q9LID5"/>
<dbReference type="PRO" id="PR:Q9LID5"/>
<dbReference type="Proteomes" id="UP000006548">
    <property type="component" value="Chromosome 3"/>
</dbReference>
<dbReference type="ExpressionAtlas" id="Q9LID5">
    <property type="expression patterns" value="baseline and differential"/>
</dbReference>
<dbReference type="GO" id="GO:0048046">
    <property type="term" value="C:apoplast"/>
    <property type="evidence" value="ECO:0007669"/>
    <property type="project" value="UniProtKB-SubCell"/>
</dbReference>
<dbReference type="GO" id="GO:0009699">
    <property type="term" value="P:phenylpropanoid biosynthetic process"/>
    <property type="evidence" value="ECO:0007669"/>
    <property type="project" value="UniProtKB-ARBA"/>
</dbReference>
<dbReference type="Gene3D" id="2.40.480.10">
    <property type="entry name" value="Allene oxide cyclase-like"/>
    <property type="match status" value="1"/>
</dbReference>
<dbReference type="InterPro" id="IPR044859">
    <property type="entry name" value="Allene_oxi_cyc_Dirigent"/>
</dbReference>
<dbReference type="InterPro" id="IPR004265">
    <property type="entry name" value="Dirigent"/>
</dbReference>
<dbReference type="PANTHER" id="PTHR21495">
    <property type="entry name" value="NUCLEOPORIN-RELATED"/>
    <property type="match status" value="1"/>
</dbReference>
<dbReference type="Pfam" id="PF03018">
    <property type="entry name" value="Dirigent"/>
    <property type="match status" value="1"/>
</dbReference>
<gene>
    <name type="primary">DIR7</name>
    <name type="ordered locus">At3g13650</name>
    <name type="ORF">MMM17.4</name>
</gene>
<evidence type="ECO:0000250" key="1"/>
<evidence type="ECO:0000255" key="2"/>
<evidence type="ECO:0000305" key="3"/>
<reference key="1">
    <citation type="journal article" date="2000" name="DNA Res.">
        <title>Structural analysis of Arabidopsis thaliana chromosome 3. II. Sequence features of the 4,251,695 bp regions covered by 90 P1, TAC and BAC clones.</title>
        <authorList>
            <person name="Kaneko T."/>
            <person name="Katoh T."/>
            <person name="Sato S."/>
            <person name="Nakamura Y."/>
            <person name="Asamizu E."/>
            <person name="Tabata S."/>
        </authorList>
    </citation>
    <scope>NUCLEOTIDE SEQUENCE [LARGE SCALE GENOMIC DNA]</scope>
    <source>
        <strain>cv. Columbia</strain>
    </source>
</reference>
<reference key="2">
    <citation type="journal article" date="2017" name="Plant J.">
        <title>Araport11: a complete reannotation of the Arabidopsis thaliana reference genome.</title>
        <authorList>
            <person name="Cheng C.Y."/>
            <person name="Krishnakumar V."/>
            <person name="Chan A.P."/>
            <person name="Thibaud-Nissen F."/>
            <person name="Schobel S."/>
            <person name="Town C.D."/>
        </authorList>
    </citation>
    <scope>GENOME REANNOTATION</scope>
    <source>
        <strain>cv. Columbia</strain>
    </source>
</reference>
<reference key="3">
    <citation type="journal article" date="2002" name="Science">
        <title>Functional annotation of a full-length Arabidopsis cDNA collection.</title>
        <authorList>
            <person name="Seki M."/>
            <person name="Narusaka M."/>
            <person name="Kamiya A."/>
            <person name="Ishida J."/>
            <person name="Satou M."/>
            <person name="Sakurai T."/>
            <person name="Nakajima M."/>
            <person name="Enju A."/>
            <person name="Akiyama K."/>
            <person name="Oono Y."/>
            <person name="Muramatsu M."/>
            <person name="Hayashizaki Y."/>
            <person name="Kawai J."/>
            <person name="Carninci P."/>
            <person name="Itoh M."/>
            <person name="Ishii Y."/>
            <person name="Arakawa T."/>
            <person name="Shibata K."/>
            <person name="Shinagawa A."/>
            <person name="Shinozaki K."/>
        </authorList>
    </citation>
    <scope>NUCLEOTIDE SEQUENCE [LARGE SCALE MRNA]</scope>
    <source>
        <strain>cv. Columbia</strain>
    </source>
</reference>
<reference key="4">
    <citation type="submission" date="2003-10" db="EMBL/GenBank/DDBJ databases">
        <title>Arabidopsis ORF clones.</title>
        <authorList>
            <person name="Cheuk R.F."/>
            <person name="Chen H."/>
            <person name="Kim C.J."/>
            <person name="Shinn P."/>
            <person name="Carninci P."/>
            <person name="Hayashizaki Y."/>
            <person name="Ishida J."/>
            <person name="Kamiya A."/>
            <person name="Kawai J."/>
            <person name="Narusaka M."/>
            <person name="Sakurai T."/>
            <person name="Satou M."/>
            <person name="Seki M."/>
            <person name="Shinozaki K."/>
            <person name="Ecker J.R."/>
        </authorList>
    </citation>
    <scope>NUCLEOTIDE SEQUENCE [LARGE SCALE MRNA]</scope>
    <source>
        <strain>cv. Columbia</strain>
    </source>
</reference>
<reference key="5">
    <citation type="journal article" date="2007" name="Phytochemistry">
        <title>Dirigent proteins in conifer defense II: Extended gene discovery, phylogeny, and constitutive and stress-induced gene expression in spruce (Picea spp.).</title>
        <authorList>
            <person name="Ralph S.G."/>
            <person name="Jancsik S."/>
            <person name="Bohlmann J."/>
        </authorList>
    </citation>
    <scope>GENE FAMILY</scope>
    <scope>NOMENCLATURE</scope>
</reference>
<comment type="function">
    <text evidence="1">Dirigent proteins impart stereoselectivity on the phenoxy radical-coupling reaction, yielding optically active lignans from two molecules of coniferyl alcohol in the biosynthesis of lignans, flavonolignans, and alkaloids and thus plays a central role in plant secondary metabolism.</text>
</comment>
<comment type="subunit">
    <text evidence="1">Homodimer.</text>
</comment>
<comment type="subcellular location">
    <subcellularLocation>
        <location evidence="1">Secreted</location>
        <location evidence="1">Extracellular space</location>
        <location evidence="1">Apoplast</location>
    </subcellularLocation>
</comment>
<comment type="similarity">
    <text evidence="3">Belongs to the plant dirigent protein family.</text>
</comment>
<name>DIR7_ARATH</name>
<accession>Q9LID5</accession>
<feature type="signal peptide" evidence="2">
    <location>
        <begin position="1"/>
        <end position="21"/>
    </location>
</feature>
<feature type="chain" id="PRO_0000422838" description="Dirigent protein 7">
    <location>
        <begin position="22"/>
        <end position="186"/>
    </location>
</feature>
<feature type="glycosylation site" description="N-linked (GlcNAc...) asparagine" evidence="2">
    <location>
        <position position="70"/>
    </location>
</feature>
<feature type="glycosylation site" description="N-linked (GlcNAc...) asparagine" evidence="2">
    <location>
        <position position="91"/>
    </location>
</feature>
<feature type="glycosylation site" description="N-linked (GlcNAc...) asparagine" evidence="2">
    <location>
        <position position="126"/>
    </location>
</feature>
<organism>
    <name type="scientific">Arabidopsis thaliana</name>
    <name type="common">Mouse-ear cress</name>
    <dbReference type="NCBI Taxonomy" id="3702"/>
    <lineage>
        <taxon>Eukaryota</taxon>
        <taxon>Viridiplantae</taxon>
        <taxon>Streptophyta</taxon>
        <taxon>Embryophyta</taxon>
        <taxon>Tracheophyta</taxon>
        <taxon>Spermatophyta</taxon>
        <taxon>Magnoliopsida</taxon>
        <taxon>eudicotyledons</taxon>
        <taxon>Gunneridae</taxon>
        <taxon>Pentapetalae</taxon>
        <taxon>rosids</taxon>
        <taxon>malvids</taxon>
        <taxon>Brassicales</taxon>
        <taxon>Brassicaceae</taxon>
        <taxon>Camelineae</taxon>
        <taxon>Arabidopsis</taxon>
    </lineage>
</organism>
<protein>
    <recommendedName>
        <fullName>Dirigent protein 7</fullName>
        <shortName>AtDIR7</shortName>
    </recommendedName>
</protein>
<sequence>MAKLILIIVTQILLIAAVVSARKGENFAKTIDKKHFGLRKEKLTHFRVYWHDILSGSNPSSVVINPPISNSSFFGSVTVIDNRLTTEVAVNSTLVGQAQGIYAATGQRDASALMVMNFAFKTGKYNGSSIAILGRNAVLTKVREMPVIGGSGLFRFARGYVEARTMWFDQKSGDATVEYSCYVLHY</sequence>
<proteinExistence type="evidence at transcript level"/>